<organism>
    <name type="scientific">Sinorhizobium medicae (strain WSM419)</name>
    <name type="common">Ensifer medicae</name>
    <dbReference type="NCBI Taxonomy" id="366394"/>
    <lineage>
        <taxon>Bacteria</taxon>
        <taxon>Pseudomonadati</taxon>
        <taxon>Pseudomonadota</taxon>
        <taxon>Alphaproteobacteria</taxon>
        <taxon>Hyphomicrobiales</taxon>
        <taxon>Rhizobiaceae</taxon>
        <taxon>Sinorhizobium/Ensifer group</taxon>
        <taxon>Sinorhizobium</taxon>
    </lineage>
</organism>
<keyword id="KW-0030">Aminoacyl-tRNA synthetase</keyword>
<keyword id="KW-0067">ATP-binding</keyword>
<keyword id="KW-0963">Cytoplasm</keyword>
<keyword id="KW-0436">Ligase</keyword>
<keyword id="KW-0547">Nucleotide-binding</keyword>
<keyword id="KW-0648">Protein biosynthesis</keyword>
<comment type="function">
    <text evidence="1">Aspartyl-tRNA synthetase with relaxed tRNA specificity since it is able to aspartylate not only its cognate tRNA(Asp) but also tRNA(Asn). Reaction proceeds in two steps: L-aspartate is first activated by ATP to form Asp-AMP and then transferred to the acceptor end of tRNA(Asp/Asn).</text>
</comment>
<comment type="catalytic activity">
    <reaction evidence="1">
        <text>tRNA(Asx) + L-aspartate + ATP = L-aspartyl-tRNA(Asx) + AMP + diphosphate</text>
        <dbReference type="Rhea" id="RHEA:18349"/>
        <dbReference type="Rhea" id="RHEA-COMP:9710"/>
        <dbReference type="Rhea" id="RHEA-COMP:9711"/>
        <dbReference type="ChEBI" id="CHEBI:29991"/>
        <dbReference type="ChEBI" id="CHEBI:30616"/>
        <dbReference type="ChEBI" id="CHEBI:33019"/>
        <dbReference type="ChEBI" id="CHEBI:78442"/>
        <dbReference type="ChEBI" id="CHEBI:78516"/>
        <dbReference type="ChEBI" id="CHEBI:456215"/>
        <dbReference type="EC" id="6.1.1.23"/>
    </reaction>
</comment>
<comment type="subunit">
    <text evidence="1">Homodimer.</text>
</comment>
<comment type="subcellular location">
    <subcellularLocation>
        <location evidence="1">Cytoplasm</location>
    </subcellularLocation>
</comment>
<comment type="similarity">
    <text evidence="1">Belongs to the class-II aminoacyl-tRNA synthetase family. Type 1 subfamily.</text>
</comment>
<dbReference type="EC" id="6.1.1.23" evidence="1"/>
<dbReference type="EMBL" id="CP000738">
    <property type="protein sequence ID" value="ABR59658.1"/>
    <property type="molecule type" value="Genomic_DNA"/>
</dbReference>
<dbReference type="RefSeq" id="WP_011975000.1">
    <property type="nucleotide sequence ID" value="NC_009636.1"/>
</dbReference>
<dbReference type="RefSeq" id="YP_001326493.1">
    <property type="nucleotide sequence ID" value="NC_009636.1"/>
</dbReference>
<dbReference type="SMR" id="A6U7M8"/>
<dbReference type="STRING" id="366394.Smed_0802"/>
<dbReference type="GeneID" id="61610077"/>
<dbReference type="KEGG" id="smd:Smed_0802"/>
<dbReference type="PATRIC" id="fig|366394.8.peg.3915"/>
<dbReference type="eggNOG" id="COG0173">
    <property type="taxonomic scope" value="Bacteria"/>
</dbReference>
<dbReference type="HOGENOM" id="CLU_014330_3_2_5"/>
<dbReference type="OrthoDB" id="9802326at2"/>
<dbReference type="Proteomes" id="UP000001108">
    <property type="component" value="Chromosome"/>
</dbReference>
<dbReference type="GO" id="GO:0005737">
    <property type="term" value="C:cytoplasm"/>
    <property type="evidence" value="ECO:0007669"/>
    <property type="project" value="UniProtKB-SubCell"/>
</dbReference>
<dbReference type="GO" id="GO:0004815">
    <property type="term" value="F:aspartate-tRNA ligase activity"/>
    <property type="evidence" value="ECO:0007669"/>
    <property type="project" value="UniProtKB-UniRule"/>
</dbReference>
<dbReference type="GO" id="GO:0050560">
    <property type="term" value="F:aspartate-tRNA(Asn) ligase activity"/>
    <property type="evidence" value="ECO:0007669"/>
    <property type="project" value="UniProtKB-EC"/>
</dbReference>
<dbReference type="GO" id="GO:0005524">
    <property type="term" value="F:ATP binding"/>
    <property type="evidence" value="ECO:0007669"/>
    <property type="project" value="UniProtKB-UniRule"/>
</dbReference>
<dbReference type="GO" id="GO:0003676">
    <property type="term" value="F:nucleic acid binding"/>
    <property type="evidence" value="ECO:0007669"/>
    <property type="project" value="InterPro"/>
</dbReference>
<dbReference type="GO" id="GO:0006422">
    <property type="term" value="P:aspartyl-tRNA aminoacylation"/>
    <property type="evidence" value="ECO:0007669"/>
    <property type="project" value="UniProtKB-UniRule"/>
</dbReference>
<dbReference type="CDD" id="cd00777">
    <property type="entry name" value="AspRS_core"/>
    <property type="match status" value="1"/>
</dbReference>
<dbReference type="CDD" id="cd04317">
    <property type="entry name" value="EcAspRS_like_N"/>
    <property type="match status" value="1"/>
</dbReference>
<dbReference type="Gene3D" id="3.30.930.10">
    <property type="entry name" value="Bira Bifunctional Protein, Domain 2"/>
    <property type="match status" value="1"/>
</dbReference>
<dbReference type="Gene3D" id="3.30.1360.30">
    <property type="entry name" value="GAD-like domain"/>
    <property type="match status" value="1"/>
</dbReference>
<dbReference type="Gene3D" id="2.40.50.140">
    <property type="entry name" value="Nucleic acid-binding proteins"/>
    <property type="match status" value="1"/>
</dbReference>
<dbReference type="HAMAP" id="MF_00044">
    <property type="entry name" value="Asp_tRNA_synth_type1"/>
    <property type="match status" value="1"/>
</dbReference>
<dbReference type="InterPro" id="IPR004364">
    <property type="entry name" value="Aa-tRNA-synt_II"/>
</dbReference>
<dbReference type="InterPro" id="IPR006195">
    <property type="entry name" value="aa-tRNA-synth_II"/>
</dbReference>
<dbReference type="InterPro" id="IPR045864">
    <property type="entry name" value="aa-tRNA-synth_II/BPL/LPL"/>
</dbReference>
<dbReference type="InterPro" id="IPR004524">
    <property type="entry name" value="Asp-tRNA-ligase_1"/>
</dbReference>
<dbReference type="InterPro" id="IPR047089">
    <property type="entry name" value="Asp-tRNA-ligase_1_N"/>
</dbReference>
<dbReference type="InterPro" id="IPR002312">
    <property type="entry name" value="Asp/Asn-tRNA-synth_IIb"/>
</dbReference>
<dbReference type="InterPro" id="IPR047090">
    <property type="entry name" value="AspRS_core"/>
</dbReference>
<dbReference type="InterPro" id="IPR004115">
    <property type="entry name" value="GAD-like_sf"/>
</dbReference>
<dbReference type="InterPro" id="IPR029351">
    <property type="entry name" value="GAD_dom"/>
</dbReference>
<dbReference type="InterPro" id="IPR012340">
    <property type="entry name" value="NA-bd_OB-fold"/>
</dbReference>
<dbReference type="InterPro" id="IPR004365">
    <property type="entry name" value="NA-bd_OB_tRNA"/>
</dbReference>
<dbReference type="NCBIfam" id="TIGR00459">
    <property type="entry name" value="aspS_bact"/>
    <property type="match status" value="1"/>
</dbReference>
<dbReference type="NCBIfam" id="NF001750">
    <property type="entry name" value="PRK00476.1"/>
    <property type="match status" value="1"/>
</dbReference>
<dbReference type="PANTHER" id="PTHR22594:SF5">
    <property type="entry name" value="ASPARTATE--TRNA LIGASE, MITOCHONDRIAL"/>
    <property type="match status" value="1"/>
</dbReference>
<dbReference type="PANTHER" id="PTHR22594">
    <property type="entry name" value="ASPARTYL/LYSYL-TRNA SYNTHETASE"/>
    <property type="match status" value="1"/>
</dbReference>
<dbReference type="Pfam" id="PF02938">
    <property type="entry name" value="GAD"/>
    <property type="match status" value="1"/>
</dbReference>
<dbReference type="Pfam" id="PF00152">
    <property type="entry name" value="tRNA-synt_2"/>
    <property type="match status" value="1"/>
</dbReference>
<dbReference type="Pfam" id="PF01336">
    <property type="entry name" value="tRNA_anti-codon"/>
    <property type="match status" value="1"/>
</dbReference>
<dbReference type="PRINTS" id="PR01042">
    <property type="entry name" value="TRNASYNTHASP"/>
</dbReference>
<dbReference type="SUPFAM" id="SSF55681">
    <property type="entry name" value="Class II aaRS and biotin synthetases"/>
    <property type="match status" value="1"/>
</dbReference>
<dbReference type="SUPFAM" id="SSF55261">
    <property type="entry name" value="GAD domain-like"/>
    <property type="match status" value="1"/>
</dbReference>
<dbReference type="SUPFAM" id="SSF50249">
    <property type="entry name" value="Nucleic acid-binding proteins"/>
    <property type="match status" value="1"/>
</dbReference>
<dbReference type="PROSITE" id="PS50862">
    <property type="entry name" value="AA_TRNA_LIGASE_II"/>
    <property type="match status" value="1"/>
</dbReference>
<protein>
    <recommendedName>
        <fullName evidence="1">Aspartate--tRNA(Asp/Asn) ligase</fullName>
        <ecNumber evidence="1">6.1.1.23</ecNumber>
    </recommendedName>
    <alternativeName>
        <fullName evidence="1">Aspartyl-tRNA synthetase</fullName>
        <shortName evidence="1">AspRS</shortName>
    </alternativeName>
    <alternativeName>
        <fullName evidence="1">Non-discriminating aspartyl-tRNA synthetase</fullName>
        <shortName evidence="1">ND-AspRS</shortName>
    </alternativeName>
</protein>
<sequence length="595" mass="67094">MHRYRSHTCAALRKSDVGSTVRLSGWVHRVRDHGGVLFIDLRDHYGMTQVVADPDSPAFKAAETVRGEWVIRVDGAVKARTDETVNRNMPTGEVELYAREIEVLSAAKELPLPVFGEPDYPEDVRLKYRFLDLRRETLHKNIVRRTEIIAAMRRRMSDIGFTEYTTPILTASSPEGARDFLVPSRIHPGNFYALPQAPQQYKQLLMVAGFDRYFQIAPCFRDEDPRADRLPGEFYQLDLEMSFVEQEDVWDAMEPMIRAIFADFAGGKPVTDKFPRIPYDAAIRKYGSDKPDLRNPIEMQEVTEHFAGSGFKVFANMIASNPKVEIWAIPAKTGGSRAFCDRMNAWAQSQGQPGLGYIFWRKEGEKLEGAGPLAKNIGEERTDAIRTQLGLGDGDACFFVAGEPAKFYKFAGEARTRAGEELNLVDRERYELCWIVDFPFYEWNEEEKRVDFAHNPFSMPQGGLTALSSDDLLSIKAFQYDMVCNGFEIASGSIRNQSPELMVKAFENVGLSQADVEERFGGLYRAFQYGAPPHGGMAFGIDRIVMLLVGAKNLREISLFPMNQQAQDLLMGAPSPAEPAQLRELAIRPVPQKKD</sequence>
<proteinExistence type="inferred from homology"/>
<accession>A6U7M8</accession>
<reference key="1">
    <citation type="submission" date="2007-06" db="EMBL/GenBank/DDBJ databases">
        <title>Complete sequence of Sinorhizobium medicae WSM419 chromosome.</title>
        <authorList>
            <consortium name="US DOE Joint Genome Institute"/>
            <person name="Copeland A."/>
            <person name="Lucas S."/>
            <person name="Lapidus A."/>
            <person name="Barry K."/>
            <person name="Glavina del Rio T."/>
            <person name="Dalin E."/>
            <person name="Tice H."/>
            <person name="Pitluck S."/>
            <person name="Chain P."/>
            <person name="Malfatti S."/>
            <person name="Shin M."/>
            <person name="Vergez L."/>
            <person name="Schmutz J."/>
            <person name="Larimer F."/>
            <person name="Land M."/>
            <person name="Hauser L."/>
            <person name="Kyrpides N."/>
            <person name="Mikhailova N."/>
            <person name="Reeve W.G."/>
            <person name="Richardson P."/>
        </authorList>
    </citation>
    <scope>NUCLEOTIDE SEQUENCE [LARGE SCALE GENOMIC DNA]</scope>
    <source>
        <strain>WSM419</strain>
    </source>
</reference>
<name>SYDND_SINMW</name>
<gene>
    <name evidence="1" type="primary">aspS</name>
    <name type="ordered locus">Smed_0802</name>
</gene>
<evidence type="ECO:0000255" key="1">
    <source>
        <dbReference type="HAMAP-Rule" id="MF_00044"/>
    </source>
</evidence>
<feature type="chain" id="PRO_1000006765" description="Aspartate--tRNA(Asp/Asn) ligase">
    <location>
        <begin position="1"/>
        <end position="595"/>
    </location>
</feature>
<feature type="region of interest" description="Aspartate" evidence="1">
    <location>
        <begin position="199"/>
        <end position="202"/>
    </location>
</feature>
<feature type="binding site" evidence="1">
    <location>
        <position position="175"/>
    </location>
    <ligand>
        <name>L-aspartate</name>
        <dbReference type="ChEBI" id="CHEBI:29991"/>
    </ligand>
</feature>
<feature type="binding site" evidence="1">
    <location>
        <begin position="221"/>
        <end position="223"/>
    </location>
    <ligand>
        <name>ATP</name>
        <dbReference type="ChEBI" id="CHEBI:30616"/>
    </ligand>
</feature>
<feature type="binding site" evidence="1">
    <location>
        <position position="221"/>
    </location>
    <ligand>
        <name>L-aspartate</name>
        <dbReference type="ChEBI" id="CHEBI:29991"/>
    </ligand>
</feature>
<feature type="binding site" evidence="1">
    <location>
        <position position="454"/>
    </location>
    <ligand>
        <name>L-aspartate</name>
        <dbReference type="ChEBI" id="CHEBI:29991"/>
    </ligand>
</feature>
<feature type="binding site" evidence="1">
    <location>
        <position position="488"/>
    </location>
    <ligand>
        <name>ATP</name>
        <dbReference type="ChEBI" id="CHEBI:30616"/>
    </ligand>
</feature>
<feature type="binding site" evidence="1">
    <location>
        <position position="495"/>
    </location>
    <ligand>
        <name>L-aspartate</name>
        <dbReference type="ChEBI" id="CHEBI:29991"/>
    </ligand>
</feature>
<feature type="binding site" evidence="1">
    <location>
        <begin position="540"/>
        <end position="543"/>
    </location>
    <ligand>
        <name>ATP</name>
        <dbReference type="ChEBI" id="CHEBI:30616"/>
    </ligand>
</feature>
<feature type="site" description="Important for tRNA non-discrimination" evidence="1">
    <location>
        <position position="33"/>
    </location>
</feature>